<feature type="chain" id="PRO_0000299462" description="Outer dense fiber protein 2">
    <location>
        <begin position="1"/>
        <end position="649"/>
    </location>
</feature>
<feature type="region of interest" description="Disordered" evidence="4">
    <location>
        <begin position="1"/>
        <end position="65"/>
    </location>
</feature>
<feature type="region of interest" description="Disordered" evidence="4">
    <location>
        <begin position="339"/>
        <end position="358"/>
    </location>
</feature>
<feature type="coiled-coil region" evidence="3">
    <location>
        <begin position="137"/>
        <end position="219"/>
    </location>
</feature>
<feature type="coiled-coil region" evidence="3">
    <location>
        <begin position="247"/>
        <end position="426"/>
    </location>
</feature>
<feature type="coiled-coil region" evidence="3">
    <location>
        <begin position="464"/>
        <end position="649"/>
    </location>
</feature>
<proteinExistence type="evidence at transcript level"/>
<gene>
    <name type="primary">odf2</name>
</gene>
<accession>Q5PQ23</accession>
<protein>
    <recommendedName>
        <fullName>Outer dense fiber protein 2</fullName>
    </recommendedName>
    <alternativeName>
        <fullName>Cenexin</fullName>
    </alternativeName>
    <alternativeName>
        <fullName>Outer dense fiber of sperm tails protein 2</fullName>
    </alternativeName>
</protein>
<evidence type="ECO:0000250" key="1">
    <source>
        <dbReference type="UniProtKB" id="A3KGV1"/>
    </source>
</evidence>
<evidence type="ECO:0000250" key="2">
    <source>
        <dbReference type="UniProtKB" id="Q5BJF6"/>
    </source>
</evidence>
<evidence type="ECO:0000255" key="3"/>
<evidence type="ECO:0000256" key="4">
    <source>
        <dbReference type="SAM" id="MobiDB-lite"/>
    </source>
</evidence>
<evidence type="ECO:0000305" key="5"/>
<name>ODFP2_XENLA</name>
<reference key="1">
    <citation type="submission" date="2004-12" db="EMBL/GenBank/DDBJ databases">
        <authorList>
            <consortium name="NIH - Xenopus Gene Collection (XGC) project"/>
        </authorList>
    </citation>
    <scope>NUCLEOTIDE SEQUENCE [LARGE SCALE MRNA]</scope>
    <source>
        <tissue>Testis</tissue>
    </source>
</reference>
<organism>
    <name type="scientific">Xenopus laevis</name>
    <name type="common">African clawed frog</name>
    <dbReference type="NCBI Taxonomy" id="8355"/>
    <lineage>
        <taxon>Eukaryota</taxon>
        <taxon>Metazoa</taxon>
        <taxon>Chordata</taxon>
        <taxon>Craniata</taxon>
        <taxon>Vertebrata</taxon>
        <taxon>Euteleostomi</taxon>
        <taxon>Amphibia</taxon>
        <taxon>Batrachia</taxon>
        <taxon>Anura</taxon>
        <taxon>Pipoidea</taxon>
        <taxon>Pipidae</taxon>
        <taxon>Xenopodinae</taxon>
        <taxon>Xenopus</taxon>
        <taxon>Xenopus</taxon>
    </lineage>
</organism>
<keyword id="KW-0966">Cell projection</keyword>
<keyword id="KW-0969">Cilium</keyword>
<keyword id="KW-0175">Coiled coil</keyword>
<keyword id="KW-0963">Cytoplasm</keyword>
<keyword id="KW-0206">Cytoskeleton</keyword>
<keyword id="KW-0217">Developmental protein</keyword>
<keyword id="KW-0221">Differentiation</keyword>
<keyword id="KW-0282">Flagellum</keyword>
<keyword id="KW-0493">Microtubule</keyword>
<keyword id="KW-1185">Reference proteome</keyword>
<keyword id="KW-0744">Spermatogenesis</keyword>
<comment type="function">
    <text evidence="2">Seems to be a major form of sperm tail outer dense fibers.</text>
</comment>
<comment type="subunit">
    <text evidence="2">Self-associates. Associates with microtubules and forms a fibrillar structure partially linked to the microtubule network (By similarity).</text>
</comment>
<comment type="subcellular location">
    <subcellularLocation>
        <location evidence="1">Cytoplasm</location>
        <location evidence="1">Cytoskeleton</location>
        <location evidence="1">Microtubule organizing center</location>
        <location evidence="1">Centrosome</location>
    </subcellularLocation>
    <subcellularLocation>
        <location evidence="1">Cell projection</location>
        <location evidence="1">Cilium</location>
    </subcellularLocation>
    <subcellularLocation>
        <location evidence="1">Cytoplasm</location>
        <location evidence="1">Cytoskeleton</location>
        <location evidence="1">Microtubule organizing center</location>
        <location evidence="1">Centrosome</location>
        <location evidence="1">Centriole</location>
    </subcellularLocation>
    <subcellularLocation>
        <location evidence="1">Cytoplasm</location>
        <location evidence="1">Cytoskeleton</location>
        <location evidence="1">Spindle pole</location>
    </subcellularLocation>
    <subcellularLocation>
        <location evidence="1">Cell projection</location>
        <location evidence="1">Cilium</location>
        <location evidence="1">Flagellum</location>
    </subcellularLocation>
</comment>
<comment type="similarity">
    <text evidence="5">Belongs to the ODF2 family.</text>
</comment>
<dbReference type="EMBL" id="BC087396">
    <property type="protein sequence ID" value="AAH87396.1"/>
    <property type="molecule type" value="mRNA"/>
</dbReference>
<dbReference type="RefSeq" id="NP_001088742.1">
    <property type="nucleotide sequence ID" value="NM_001095273.1"/>
</dbReference>
<dbReference type="SMR" id="Q5PQ23"/>
<dbReference type="DNASU" id="496006"/>
<dbReference type="GeneID" id="496006"/>
<dbReference type="AGR" id="Xenbase:XB-GENE-977569"/>
<dbReference type="CTD" id="496006"/>
<dbReference type="Xenbase" id="XB-GENE-977569">
    <property type="gene designation" value="odf2.L"/>
</dbReference>
<dbReference type="OrthoDB" id="413404at2759"/>
<dbReference type="Proteomes" id="UP000186698">
    <property type="component" value="Chromosome 8L"/>
</dbReference>
<dbReference type="Bgee" id="496006">
    <property type="expression patterns" value="Expressed in testis and 14 other cell types or tissues"/>
</dbReference>
<dbReference type="GO" id="GO:0005814">
    <property type="term" value="C:centriole"/>
    <property type="evidence" value="ECO:0007669"/>
    <property type="project" value="UniProtKB-SubCell"/>
</dbReference>
<dbReference type="GO" id="GO:0005813">
    <property type="term" value="C:centrosome"/>
    <property type="evidence" value="ECO:0000318"/>
    <property type="project" value="GO_Central"/>
</dbReference>
<dbReference type="GO" id="GO:0005737">
    <property type="term" value="C:cytoplasm"/>
    <property type="evidence" value="ECO:0007669"/>
    <property type="project" value="UniProtKB-KW"/>
</dbReference>
<dbReference type="GO" id="GO:0005874">
    <property type="term" value="C:microtubule"/>
    <property type="evidence" value="ECO:0007669"/>
    <property type="project" value="UniProtKB-KW"/>
</dbReference>
<dbReference type="GO" id="GO:0036126">
    <property type="term" value="C:sperm flagellum"/>
    <property type="evidence" value="ECO:0000250"/>
    <property type="project" value="UniProtKB"/>
</dbReference>
<dbReference type="GO" id="GO:0000922">
    <property type="term" value="C:spindle pole"/>
    <property type="evidence" value="ECO:0007669"/>
    <property type="project" value="UniProtKB-SubCell"/>
</dbReference>
<dbReference type="GO" id="GO:0030154">
    <property type="term" value="P:cell differentiation"/>
    <property type="evidence" value="ECO:0007669"/>
    <property type="project" value="UniProtKB-KW"/>
</dbReference>
<dbReference type="GO" id="GO:1902017">
    <property type="term" value="P:regulation of cilium assembly"/>
    <property type="evidence" value="ECO:0000318"/>
    <property type="project" value="GO_Central"/>
</dbReference>
<dbReference type="GO" id="GO:0007283">
    <property type="term" value="P:spermatogenesis"/>
    <property type="evidence" value="ECO:0007669"/>
    <property type="project" value="UniProtKB-KW"/>
</dbReference>
<dbReference type="InterPro" id="IPR026099">
    <property type="entry name" value="Odf2-rel"/>
</dbReference>
<dbReference type="PANTHER" id="PTHR23162">
    <property type="entry name" value="OUTER DENSE FIBER OF SPERM TAILS 2"/>
    <property type="match status" value="1"/>
</dbReference>
<dbReference type="PANTHER" id="PTHR23162:SF8">
    <property type="entry name" value="OUTER DENSE FIBER PROTEIN 2"/>
    <property type="match status" value="1"/>
</dbReference>
<sequence>MKNRSPSPPLHVHVDESTPVHVHIKKSSRPPAKTQQGAKLKKKGMGNLRRSATVKTKVPWIPPGKSSLRDAGLKWEGLTHRLDITPPDTERMFSALRMSDLSTDEEEMKRSKMNSYEEKIATLMSEMGTLKHELELQKREKYLGKCEEQLAASKRLLEAQQEELAEVSQELVETENENVWLKRSLDRIQEEKGLSILQKQQLQEEKAHLLAKLLEAETDGAEAAKQVTLLSDTIQRLKHEKRMTSTDINLLTRQKELLLQKLNTFEDTNRSLRTLLREQHRQETETYRLMEQKEMLLKKLSDADTEKMHLQLKLHEQEEKVEDLLAQLKTEKDLSKTASEVSKSIESTKAHLQGQLRTREAENNRLSVQIRNLERNEAHQKEEIVKLMEQLTELKQKVDSEKEALKKSVRAQKQRAERSEETLEMLNRQLVGNDSELAKALSSAETWRSRYNKLMKESSQHEEEVAVLSNRLKGLLGESHGIEERGRLERDSLLEKLHQQTTENTCLRLEHEKLKASLTTVEEKLSLAQSEVQQLKNSLRQYEGLVDTYKEQLQKSRQEANSISLQLEMSEKENKNIKEDMNLELEQMRRKFQNRLSELEHLPEILKSTELDLQECHQQLRSYEQKSSELSSTISDLRTRVRNWRNCAL</sequence>